<protein>
    <recommendedName>
        <fullName>Ribonuclease H2 subunit B</fullName>
        <shortName>RNase H2 subunit B</shortName>
        <shortName>Rnh2B</shortName>
    </recommendedName>
    <alternativeName>
        <fullName>RNase H(202)</fullName>
    </alternativeName>
    <alternativeName>
        <fullName>Ribonuclease HI subunit B</fullName>
    </alternativeName>
</protein>
<proteinExistence type="inferred from homology"/>
<comment type="function">
    <text evidence="1">Non catalytic subunit of RNase H2, an endonuclease that specifically degrades the RNA of RNA:DNA hybrids. Participates in DNA replication, possibly by mediating the removal of lagging-strand Okazaki fragment RNA primers during DNA replication. Mediates the excision of single ribonucleotides from DNA:RNA duplexes (By similarity).</text>
</comment>
<comment type="subunit">
    <text evidence="1">Component of the RNase H2 complex.</text>
</comment>
<comment type="subcellular location">
    <subcellularLocation>
        <location evidence="3">Nucleus</location>
    </subcellularLocation>
    <subcellularLocation>
        <location evidence="3">Cytoplasm</location>
    </subcellularLocation>
</comment>
<comment type="similarity">
    <text evidence="4">Belongs to the RNase H2 subunit B family.</text>
</comment>
<accession>O94627</accession>
<reference key="1">
    <citation type="journal article" date="2002" name="Nature">
        <title>The genome sequence of Schizosaccharomyces pombe.</title>
        <authorList>
            <person name="Wood V."/>
            <person name="Gwilliam R."/>
            <person name="Rajandream M.A."/>
            <person name="Lyne M.H."/>
            <person name="Lyne R."/>
            <person name="Stewart A."/>
            <person name="Sgouros J.G."/>
            <person name="Peat N."/>
            <person name="Hayles J."/>
            <person name="Baker S.G."/>
            <person name="Basham D."/>
            <person name="Bowman S."/>
            <person name="Brooks K."/>
            <person name="Brown D."/>
            <person name="Brown S."/>
            <person name="Chillingworth T."/>
            <person name="Churcher C.M."/>
            <person name="Collins M."/>
            <person name="Connor R."/>
            <person name="Cronin A."/>
            <person name="Davis P."/>
            <person name="Feltwell T."/>
            <person name="Fraser A."/>
            <person name="Gentles S."/>
            <person name="Goble A."/>
            <person name="Hamlin N."/>
            <person name="Harris D.E."/>
            <person name="Hidalgo J."/>
            <person name="Hodgson G."/>
            <person name="Holroyd S."/>
            <person name="Hornsby T."/>
            <person name="Howarth S."/>
            <person name="Huckle E.J."/>
            <person name="Hunt S."/>
            <person name="Jagels K."/>
            <person name="James K.D."/>
            <person name="Jones L."/>
            <person name="Jones M."/>
            <person name="Leather S."/>
            <person name="McDonald S."/>
            <person name="McLean J."/>
            <person name="Mooney P."/>
            <person name="Moule S."/>
            <person name="Mungall K.L."/>
            <person name="Murphy L.D."/>
            <person name="Niblett D."/>
            <person name="Odell C."/>
            <person name="Oliver K."/>
            <person name="O'Neil S."/>
            <person name="Pearson D."/>
            <person name="Quail M.A."/>
            <person name="Rabbinowitsch E."/>
            <person name="Rutherford K.M."/>
            <person name="Rutter S."/>
            <person name="Saunders D."/>
            <person name="Seeger K."/>
            <person name="Sharp S."/>
            <person name="Skelton J."/>
            <person name="Simmonds M.N."/>
            <person name="Squares R."/>
            <person name="Squares S."/>
            <person name="Stevens K."/>
            <person name="Taylor K."/>
            <person name="Taylor R.G."/>
            <person name="Tivey A."/>
            <person name="Walsh S.V."/>
            <person name="Warren T."/>
            <person name="Whitehead S."/>
            <person name="Woodward J.R."/>
            <person name="Volckaert G."/>
            <person name="Aert R."/>
            <person name="Robben J."/>
            <person name="Grymonprez B."/>
            <person name="Weltjens I."/>
            <person name="Vanstreels E."/>
            <person name="Rieger M."/>
            <person name="Schaefer M."/>
            <person name="Mueller-Auer S."/>
            <person name="Gabel C."/>
            <person name="Fuchs M."/>
            <person name="Duesterhoeft A."/>
            <person name="Fritzc C."/>
            <person name="Holzer E."/>
            <person name="Moestl D."/>
            <person name="Hilbert H."/>
            <person name="Borzym K."/>
            <person name="Langer I."/>
            <person name="Beck A."/>
            <person name="Lehrach H."/>
            <person name="Reinhardt R."/>
            <person name="Pohl T.M."/>
            <person name="Eger P."/>
            <person name="Zimmermann W."/>
            <person name="Wedler H."/>
            <person name="Wambutt R."/>
            <person name="Purnelle B."/>
            <person name="Goffeau A."/>
            <person name="Cadieu E."/>
            <person name="Dreano S."/>
            <person name="Gloux S."/>
            <person name="Lelaure V."/>
            <person name="Mottier S."/>
            <person name="Galibert F."/>
            <person name="Aves S.J."/>
            <person name="Xiang Z."/>
            <person name="Hunt C."/>
            <person name="Moore K."/>
            <person name="Hurst S.M."/>
            <person name="Lucas M."/>
            <person name="Rochet M."/>
            <person name="Gaillardin C."/>
            <person name="Tallada V.A."/>
            <person name="Garzon A."/>
            <person name="Thode G."/>
            <person name="Daga R.R."/>
            <person name="Cruzado L."/>
            <person name="Jimenez J."/>
            <person name="Sanchez M."/>
            <person name="del Rey F."/>
            <person name="Benito J."/>
            <person name="Dominguez A."/>
            <person name="Revuelta J.L."/>
            <person name="Moreno S."/>
            <person name="Armstrong J."/>
            <person name="Forsburg S.L."/>
            <person name="Cerutti L."/>
            <person name="Lowe T."/>
            <person name="McCombie W.R."/>
            <person name="Paulsen I."/>
            <person name="Potashkin J."/>
            <person name="Shpakovski G.V."/>
            <person name="Ussery D."/>
            <person name="Barrell B.G."/>
            <person name="Nurse P."/>
        </authorList>
    </citation>
    <scope>NUCLEOTIDE SEQUENCE [LARGE SCALE GENOMIC DNA]</scope>
    <source>
        <strain>972 / ATCC 24843</strain>
    </source>
</reference>
<reference key="2">
    <citation type="journal article" date="2006" name="Nat. Biotechnol.">
        <title>ORFeome cloning and global analysis of protein localization in the fission yeast Schizosaccharomyces pombe.</title>
        <authorList>
            <person name="Matsuyama A."/>
            <person name="Arai R."/>
            <person name="Yashiroda Y."/>
            <person name="Shirai A."/>
            <person name="Kamata A."/>
            <person name="Sekido S."/>
            <person name="Kobayashi Y."/>
            <person name="Hashimoto A."/>
            <person name="Hamamoto M."/>
            <person name="Hiraoka Y."/>
            <person name="Horinouchi S."/>
            <person name="Yoshida M."/>
        </authorList>
    </citation>
    <scope>SUBCELLULAR LOCATION [LARGE SCALE ANALYSIS]</scope>
</reference>
<name>RNH2B_SCHPO</name>
<sequence>MQGKIFILPKDSTNQQFVELSHPLTGRPLRYLLTNDHLLQILQVGDSSKQRSWFVGDHVVSDGYLYVCTPIDLLALVLPIIQELTWSRRKEPNRYVSFEDFIEHFDNMGPHYPRVSEVLSPNLLNTLHRICKVNEPVGSLPKTFQLDESSVVKILLRKAKVAQENLPPSIVTELKKQLAPLDLRTPLPQDLLELSCKWHAASLVCEDLQPEWYNKLAYWQEELAPLHAYTKNLEESRKILVEKEALLNSKKRPQNSDITSSLLKKPNRKQATKKSKYFSGEGMTKISSFFTKK</sequence>
<evidence type="ECO:0000250" key="1"/>
<evidence type="ECO:0000256" key="2">
    <source>
        <dbReference type="SAM" id="MobiDB-lite"/>
    </source>
</evidence>
<evidence type="ECO:0000269" key="3">
    <source>
    </source>
</evidence>
<evidence type="ECO:0000305" key="4"/>
<gene>
    <name type="primary">rnh202</name>
    <name type="ORF">SPBC1347.08c</name>
</gene>
<keyword id="KW-0963">Cytoplasm</keyword>
<keyword id="KW-0539">Nucleus</keyword>
<keyword id="KW-1185">Reference proteome</keyword>
<organism>
    <name type="scientific">Schizosaccharomyces pombe (strain 972 / ATCC 24843)</name>
    <name type="common">Fission yeast</name>
    <dbReference type="NCBI Taxonomy" id="284812"/>
    <lineage>
        <taxon>Eukaryota</taxon>
        <taxon>Fungi</taxon>
        <taxon>Dikarya</taxon>
        <taxon>Ascomycota</taxon>
        <taxon>Taphrinomycotina</taxon>
        <taxon>Schizosaccharomycetes</taxon>
        <taxon>Schizosaccharomycetales</taxon>
        <taxon>Schizosaccharomycetaceae</taxon>
        <taxon>Schizosaccharomyces</taxon>
    </lineage>
</organism>
<dbReference type="EMBL" id="CU329671">
    <property type="protein sequence ID" value="CAB37439.1"/>
    <property type="molecule type" value="Genomic_DNA"/>
</dbReference>
<dbReference type="PIR" id="T39396">
    <property type="entry name" value="T39396"/>
</dbReference>
<dbReference type="RefSeq" id="NP_596700.1">
    <property type="nucleotide sequence ID" value="NM_001022624.2"/>
</dbReference>
<dbReference type="SMR" id="O94627"/>
<dbReference type="BioGRID" id="276437">
    <property type="interactions" value="26"/>
</dbReference>
<dbReference type="FunCoup" id="O94627">
    <property type="interactions" value="59"/>
</dbReference>
<dbReference type="STRING" id="284812.O94627"/>
<dbReference type="PaxDb" id="4896-SPBC1347.08c.1"/>
<dbReference type="EnsemblFungi" id="SPBC1347.08c.1">
    <property type="protein sequence ID" value="SPBC1347.08c.1:pep"/>
    <property type="gene ID" value="SPBC1347.08c"/>
</dbReference>
<dbReference type="PomBase" id="SPBC1347.08c">
    <property type="gene designation" value="rnh202"/>
</dbReference>
<dbReference type="VEuPathDB" id="FungiDB:SPBC1347.08c"/>
<dbReference type="eggNOG" id="KOG4705">
    <property type="taxonomic scope" value="Eukaryota"/>
</dbReference>
<dbReference type="HOGENOM" id="CLU_950457_0_0_1"/>
<dbReference type="InParanoid" id="O94627"/>
<dbReference type="OMA" id="YICTPVD"/>
<dbReference type="PhylomeDB" id="O94627"/>
<dbReference type="PRO" id="PR:O94627"/>
<dbReference type="Proteomes" id="UP000002485">
    <property type="component" value="Chromosome II"/>
</dbReference>
<dbReference type="GO" id="GO:0005829">
    <property type="term" value="C:cytosol"/>
    <property type="evidence" value="ECO:0007005"/>
    <property type="project" value="PomBase"/>
</dbReference>
<dbReference type="GO" id="GO:0005654">
    <property type="term" value="C:nucleoplasm"/>
    <property type="evidence" value="ECO:0000318"/>
    <property type="project" value="GO_Central"/>
</dbReference>
<dbReference type="GO" id="GO:0005634">
    <property type="term" value="C:nucleus"/>
    <property type="evidence" value="ECO:0007005"/>
    <property type="project" value="PomBase"/>
</dbReference>
<dbReference type="GO" id="GO:0032299">
    <property type="term" value="C:ribonuclease H2 complex"/>
    <property type="evidence" value="ECO:0000318"/>
    <property type="project" value="GO_Central"/>
</dbReference>
<dbReference type="GO" id="GO:1903469">
    <property type="term" value="P:removal of RNA primer involved in mitotic DNA replication"/>
    <property type="evidence" value="ECO:0000305"/>
    <property type="project" value="PomBase"/>
</dbReference>
<dbReference type="GO" id="GO:0006401">
    <property type="term" value="P:RNA catabolic process"/>
    <property type="evidence" value="ECO:0000318"/>
    <property type="project" value="GO_Central"/>
</dbReference>
<dbReference type="CDD" id="cd09270">
    <property type="entry name" value="RNase_H2-B"/>
    <property type="match status" value="1"/>
</dbReference>
<dbReference type="FunFam" id="1.10.20.120:FF:000012">
    <property type="entry name" value="Ribonuclease H2 subunit B"/>
    <property type="match status" value="1"/>
</dbReference>
<dbReference type="Gene3D" id="1.10.20.120">
    <property type="match status" value="1"/>
</dbReference>
<dbReference type="Gene3D" id="2.20.25.530">
    <property type="match status" value="1"/>
</dbReference>
<dbReference type="InterPro" id="IPR040456">
    <property type="entry name" value="RNase_H2_suB"/>
</dbReference>
<dbReference type="InterPro" id="IPR019024">
    <property type="entry name" value="RNase_H2_suB_wHTH"/>
</dbReference>
<dbReference type="InterPro" id="IPR041195">
    <property type="entry name" value="Rnh202_N"/>
</dbReference>
<dbReference type="PANTHER" id="PTHR13383">
    <property type="entry name" value="RIBONUCLEASE H2 SUBUNIT B"/>
    <property type="match status" value="1"/>
</dbReference>
<dbReference type="PANTHER" id="PTHR13383:SF11">
    <property type="entry name" value="RIBONUCLEASE H2 SUBUNIT B"/>
    <property type="match status" value="1"/>
</dbReference>
<dbReference type="Pfam" id="PF09468">
    <property type="entry name" value="RNase_H2-Ydr279"/>
    <property type="match status" value="1"/>
</dbReference>
<dbReference type="Pfam" id="PF17745">
    <property type="entry name" value="Ydr279_N"/>
    <property type="match status" value="1"/>
</dbReference>
<feature type="chain" id="PRO_0000343167" description="Ribonuclease H2 subunit B">
    <location>
        <begin position="1"/>
        <end position="293"/>
    </location>
</feature>
<feature type="region of interest" description="Disordered" evidence="2">
    <location>
        <begin position="251"/>
        <end position="278"/>
    </location>
</feature>
<feature type="compositionally biased region" description="Basic residues" evidence="2">
    <location>
        <begin position="265"/>
        <end position="276"/>
    </location>
</feature>